<sequence>MVWTQLHAEIHRTIRSRHLFEGNKRLLVAVSGGQDSLCLIKLLLDLQPKWGWELGIAHCDHRWRADSQANADHVKNLAENWGVSFYLETATKPVNSEATAREWRYQALSAIAQAHNYQYIVTGHTASDRAETLLYNLMRGTGADGLQALTWQRPLTENILLVRPLLEITRKQTEQFCQEFQLPIWEDSTNQDLKYARNRIRQELIPYLQANFNPQAELAIAQTAELLQADVEYLERTAQQLKEEAMEWEVGEEFLSSSSPSSLLLRLNRQVLQKAPLALQRRVMRQILQEILADAPNFEHIEKLTALITAPNRSQTDPFPGGAIAQVQGNWIILRNGERRSN</sequence>
<reference key="1">
    <citation type="journal article" date="2001" name="DNA Res.">
        <title>Complete genomic sequence of the filamentous nitrogen-fixing cyanobacterium Anabaena sp. strain PCC 7120.</title>
        <authorList>
            <person name="Kaneko T."/>
            <person name="Nakamura Y."/>
            <person name="Wolk C.P."/>
            <person name="Kuritz T."/>
            <person name="Sasamoto S."/>
            <person name="Watanabe A."/>
            <person name="Iriguchi M."/>
            <person name="Ishikawa A."/>
            <person name="Kawashima K."/>
            <person name="Kimura T."/>
            <person name="Kishida Y."/>
            <person name="Kohara M."/>
            <person name="Matsumoto M."/>
            <person name="Matsuno A."/>
            <person name="Muraki A."/>
            <person name="Nakazaki N."/>
            <person name="Shimpo S."/>
            <person name="Sugimoto M."/>
            <person name="Takazawa M."/>
            <person name="Yamada M."/>
            <person name="Yasuda M."/>
            <person name="Tabata S."/>
        </authorList>
    </citation>
    <scope>NUCLEOTIDE SEQUENCE [LARGE SCALE GENOMIC DNA]</scope>
    <source>
        <strain>PCC 7120 / SAG 25.82 / UTEX 2576</strain>
    </source>
</reference>
<proteinExistence type="inferred from homology"/>
<organism>
    <name type="scientific">Nostoc sp. (strain PCC 7120 / SAG 25.82 / UTEX 2576)</name>
    <dbReference type="NCBI Taxonomy" id="103690"/>
    <lineage>
        <taxon>Bacteria</taxon>
        <taxon>Bacillati</taxon>
        <taxon>Cyanobacteriota</taxon>
        <taxon>Cyanophyceae</taxon>
        <taxon>Nostocales</taxon>
        <taxon>Nostocaceae</taxon>
        <taxon>Nostoc</taxon>
    </lineage>
</organism>
<accession>Q8YYB8</accession>
<protein>
    <recommendedName>
        <fullName evidence="1">tRNA(Ile)-lysidine synthase</fullName>
        <ecNumber evidence="1">6.3.4.19</ecNumber>
    </recommendedName>
    <alternativeName>
        <fullName evidence="1">tRNA(Ile)-2-lysyl-cytidine synthase</fullName>
    </alternativeName>
    <alternativeName>
        <fullName evidence="1">tRNA(Ile)-lysidine synthetase</fullName>
    </alternativeName>
</protein>
<keyword id="KW-0067">ATP-binding</keyword>
<keyword id="KW-0963">Cytoplasm</keyword>
<keyword id="KW-0436">Ligase</keyword>
<keyword id="KW-0547">Nucleotide-binding</keyword>
<keyword id="KW-1185">Reference proteome</keyword>
<keyword id="KW-0819">tRNA processing</keyword>
<dbReference type="EC" id="6.3.4.19" evidence="1"/>
<dbReference type="EMBL" id="BA000019">
    <property type="protein sequence ID" value="BAB72889.1"/>
    <property type="molecule type" value="Genomic_DNA"/>
</dbReference>
<dbReference type="PIR" id="AI1922">
    <property type="entry name" value="AI1922"/>
</dbReference>
<dbReference type="RefSeq" id="WP_010995106.1">
    <property type="nucleotide sequence ID" value="NZ_RSCN01000006.1"/>
</dbReference>
<dbReference type="SMR" id="Q8YYB8"/>
<dbReference type="STRING" id="103690.gene:10492945"/>
<dbReference type="KEGG" id="ana:all0932"/>
<dbReference type="eggNOG" id="COG0037">
    <property type="taxonomic scope" value="Bacteria"/>
</dbReference>
<dbReference type="OrthoDB" id="9807403at2"/>
<dbReference type="Proteomes" id="UP000002483">
    <property type="component" value="Chromosome"/>
</dbReference>
<dbReference type="GO" id="GO:0005737">
    <property type="term" value="C:cytoplasm"/>
    <property type="evidence" value="ECO:0007669"/>
    <property type="project" value="UniProtKB-SubCell"/>
</dbReference>
<dbReference type="GO" id="GO:0005524">
    <property type="term" value="F:ATP binding"/>
    <property type="evidence" value="ECO:0007669"/>
    <property type="project" value="UniProtKB-UniRule"/>
</dbReference>
<dbReference type="GO" id="GO:0032267">
    <property type="term" value="F:tRNA(Ile)-lysidine synthase activity"/>
    <property type="evidence" value="ECO:0007669"/>
    <property type="project" value="UniProtKB-EC"/>
</dbReference>
<dbReference type="GO" id="GO:0006400">
    <property type="term" value="P:tRNA modification"/>
    <property type="evidence" value="ECO:0007669"/>
    <property type="project" value="UniProtKB-UniRule"/>
</dbReference>
<dbReference type="CDD" id="cd01992">
    <property type="entry name" value="TilS_N"/>
    <property type="match status" value="1"/>
</dbReference>
<dbReference type="Gene3D" id="1.20.59.20">
    <property type="match status" value="1"/>
</dbReference>
<dbReference type="Gene3D" id="3.40.50.620">
    <property type="entry name" value="HUPs"/>
    <property type="match status" value="1"/>
</dbReference>
<dbReference type="HAMAP" id="MF_01161">
    <property type="entry name" value="tRNA_Ile_lys_synt"/>
    <property type="match status" value="1"/>
</dbReference>
<dbReference type="InterPro" id="IPR014729">
    <property type="entry name" value="Rossmann-like_a/b/a_fold"/>
</dbReference>
<dbReference type="InterPro" id="IPR011063">
    <property type="entry name" value="TilS/TtcA_N"/>
</dbReference>
<dbReference type="InterPro" id="IPR012094">
    <property type="entry name" value="tRNA_Ile_lys_synt"/>
</dbReference>
<dbReference type="InterPro" id="IPR012795">
    <property type="entry name" value="tRNA_Ile_lys_synt_N"/>
</dbReference>
<dbReference type="InterPro" id="IPR015262">
    <property type="entry name" value="tRNA_Ile_lys_synt_subst-bd"/>
</dbReference>
<dbReference type="NCBIfam" id="TIGR02432">
    <property type="entry name" value="lysidine_TilS_N"/>
    <property type="match status" value="1"/>
</dbReference>
<dbReference type="PANTHER" id="PTHR43033">
    <property type="entry name" value="TRNA(ILE)-LYSIDINE SYNTHASE-RELATED"/>
    <property type="match status" value="1"/>
</dbReference>
<dbReference type="PANTHER" id="PTHR43033:SF1">
    <property type="entry name" value="TRNA(ILE)-LYSIDINE SYNTHASE-RELATED"/>
    <property type="match status" value="1"/>
</dbReference>
<dbReference type="Pfam" id="PF01171">
    <property type="entry name" value="ATP_bind_3"/>
    <property type="match status" value="1"/>
</dbReference>
<dbReference type="Pfam" id="PF09179">
    <property type="entry name" value="TilS"/>
    <property type="match status" value="1"/>
</dbReference>
<dbReference type="SUPFAM" id="SSF52402">
    <property type="entry name" value="Adenine nucleotide alpha hydrolases-like"/>
    <property type="match status" value="1"/>
</dbReference>
<dbReference type="SUPFAM" id="SSF82829">
    <property type="entry name" value="MesJ substrate recognition domain-like"/>
    <property type="match status" value="1"/>
</dbReference>
<feature type="chain" id="PRO_0000181638" description="tRNA(Ile)-lysidine synthase">
    <location>
        <begin position="1"/>
        <end position="342"/>
    </location>
</feature>
<feature type="binding site" evidence="1">
    <location>
        <begin position="31"/>
        <end position="36"/>
    </location>
    <ligand>
        <name>ATP</name>
        <dbReference type="ChEBI" id="CHEBI:30616"/>
    </ligand>
</feature>
<name>TILS_NOSS1</name>
<gene>
    <name evidence="1" type="primary">tilS</name>
    <name type="ordered locus">all0932</name>
</gene>
<evidence type="ECO:0000255" key="1">
    <source>
        <dbReference type="HAMAP-Rule" id="MF_01161"/>
    </source>
</evidence>
<comment type="function">
    <text evidence="1">Ligates lysine onto the cytidine present at position 34 of the AUA codon-specific tRNA(Ile) that contains the anticodon CAU, in an ATP-dependent manner. Cytidine is converted to lysidine, thus changing the amino acid specificity of the tRNA from methionine to isoleucine.</text>
</comment>
<comment type="catalytic activity">
    <reaction evidence="1">
        <text>cytidine(34) in tRNA(Ile2) + L-lysine + ATP = lysidine(34) in tRNA(Ile2) + AMP + diphosphate + H(+)</text>
        <dbReference type="Rhea" id="RHEA:43744"/>
        <dbReference type="Rhea" id="RHEA-COMP:10625"/>
        <dbReference type="Rhea" id="RHEA-COMP:10670"/>
        <dbReference type="ChEBI" id="CHEBI:15378"/>
        <dbReference type="ChEBI" id="CHEBI:30616"/>
        <dbReference type="ChEBI" id="CHEBI:32551"/>
        <dbReference type="ChEBI" id="CHEBI:33019"/>
        <dbReference type="ChEBI" id="CHEBI:82748"/>
        <dbReference type="ChEBI" id="CHEBI:83665"/>
        <dbReference type="ChEBI" id="CHEBI:456215"/>
        <dbReference type="EC" id="6.3.4.19"/>
    </reaction>
</comment>
<comment type="subcellular location">
    <subcellularLocation>
        <location evidence="1">Cytoplasm</location>
    </subcellularLocation>
</comment>
<comment type="domain">
    <text>The N-terminal region contains the highly conserved SGGXDS motif, predicted to be a P-loop motif involved in ATP binding.</text>
</comment>
<comment type="similarity">
    <text evidence="1">Belongs to the tRNA(Ile)-lysidine synthase family.</text>
</comment>